<evidence type="ECO:0000250" key="1">
    <source>
        <dbReference type="UniProtKB" id="A0A0A7HGA1"/>
    </source>
</evidence>
<evidence type="ECO:0000269" key="2">
    <source>
    </source>
</evidence>
<evidence type="ECO:0000303" key="3">
    <source>
    </source>
</evidence>
<evidence type="ECO:0000305" key="4"/>
<evidence type="ECO:0000305" key="5">
    <source>
    </source>
</evidence>
<evidence type="ECO:0007829" key="6">
    <source>
        <dbReference type="PDB" id="6IQW"/>
    </source>
</evidence>
<evidence type="ECO:0007829" key="7">
    <source>
        <dbReference type="PDB" id="6MUU"/>
    </source>
</evidence>
<evidence type="ECO:0007829" key="8">
    <source>
        <dbReference type="PDB" id="6O75"/>
    </source>
</evidence>
<evidence type="ECO:0007829" key="9">
    <source>
        <dbReference type="PDB" id="6O78"/>
    </source>
</evidence>
<evidence type="ECO:0007829" key="10">
    <source>
        <dbReference type="PDB" id="6O7B"/>
    </source>
</evidence>
<evidence type="ECO:0007829" key="11">
    <source>
        <dbReference type="PDB" id="6O7H"/>
    </source>
</evidence>
<dbReference type="EMBL" id="CP000855">
    <property type="protein sequence ID" value="ACJ16384.1"/>
    <property type="molecule type" value="Genomic_DNA"/>
</dbReference>
<dbReference type="RefSeq" id="WP_012571856.1">
    <property type="nucleotide sequence ID" value="NC_011529.1"/>
</dbReference>
<dbReference type="PDB" id="6IQW">
    <property type="method" value="EM"/>
    <property type="resolution" value="3.35 A"/>
    <property type="chains" value="E=1-289"/>
</dbReference>
<dbReference type="PDB" id="6MUA">
    <property type="method" value="X-ray"/>
    <property type="resolution" value="2.91 A"/>
    <property type="chains" value="B=1-289"/>
</dbReference>
<dbReference type="PDB" id="6MUR">
    <property type="method" value="EM"/>
    <property type="resolution" value="3.10 A"/>
    <property type="chains" value="E=1-289"/>
</dbReference>
<dbReference type="PDB" id="6MUS">
    <property type="method" value="EM"/>
    <property type="resolution" value="3.60 A"/>
    <property type="chains" value="E=1-289"/>
</dbReference>
<dbReference type="PDB" id="6MUT">
    <property type="method" value="EM"/>
    <property type="resolution" value="3.10 A"/>
    <property type="chains" value="E=1-289"/>
</dbReference>
<dbReference type="PDB" id="6MUU">
    <property type="method" value="EM"/>
    <property type="resolution" value="3.00 A"/>
    <property type="chains" value="E=1-289"/>
</dbReference>
<dbReference type="PDB" id="6O73">
    <property type="method" value="X-ray"/>
    <property type="resolution" value="3.00 A"/>
    <property type="chains" value="B=1-289"/>
</dbReference>
<dbReference type="PDB" id="6O74">
    <property type="method" value="X-ray"/>
    <property type="resolution" value="2.71 A"/>
    <property type="chains" value="B=1-289"/>
</dbReference>
<dbReference type="PDB" id="6O75">
    <property type="method" value="X-ray"/>
    <property type="resolution" value="2.60 A"/>
    <property type="chains" value="B=1-289"/>
</dbReference>
<dbReference type="PDB" id="6O78">
    <property type="method" value="X-ray"/>
    <property type="resolution" value="2.80 A"/>
    <property type="chains" value="B=1-289"/>
</dbReference>
<dbReference type="PDB" id="6O79">
    <property type="method" value="X-ray"/>
    <property type="resolution" value="3.00 A"/>
    <property type="chains" value="B=1-289"/>
</dbReference>
<dbReference type="PDB" id="6O7B">
    <property type="method" value="X-ray"/>
    <property type="resolution" value="2.40 A"/>
    <property type="chains" value="B=1-289"/>
</dbReference>
<dbReference type="PDB" id="6O7D">
    <property type="method" value="X-ray"/>
    <property type="resolution" value="2.81 A"/>
    <property type="chains" value="B=1-289"/>
</dbReference>
<dbReference type="PDB" id="6O7E">
    <property type="method" value="EM"/>
    <property type="resolution" value="3.20 A"/>
    <property type="chains" value="E=1-289"/>
</dbReference>
<dbReference type="PDB" id="6O7H">
    <property type="method" value="EM"/>
    <property type="resolution" value="2.90 A"/>
    <property type="chains" value="E=1-289"/>
</dbReference>
<dbReference type="PDB" id="6O7I">
    <property type="method" value="EM"/>
    <property type="resolution" value="3.20 A"/>
    <property type="chains" value="E=1-289"/>
</dbReference>
<dbReference type="PDBsum" id="6IQW"/>
<dbReference type="PDBsum" id="6MUA"/>
<dbReference type="PDBsum" id="6MUR"/>
<dbReference type="PDBsum" id="6MUS"/>
<dbReference type="PDBsum" id="6MUT"/>
<dbReference type="PDBsum" id="6MUU"/>
<dbReference type="PDBsum" id="6O73"/>
<dbReference type="PDBsum" id="6O74"/>
<dbReference type="PDBsum" id="6O75"/>
<dbReference type="PDBsum" id="6O78"/>
<dbReference type="PDBsum" id="6O79"/>
<dbReference type="PDBsum" id="6O7B"/>
<dbReference type="PDBsum" id="6O7D"/>
<dbReference type="PDBsum" id="6O7E"/>
<dbReference type="PDBsum" id="6O7H"/>
<dbReference type="PDBsum" id="6O7I"/>
<dbReference type="EMDB" id="EMD-0640"/>
<dbReference type="EMDB" id="EMD-0641"/>
<dbReference type="EMDB" id="EMD-0642"/>
<dbReference type="EMDB" id="EMD-9253"/>
<dbReference type="EMDB" id="EMD-9254"/>
<dbReference type="EMDB" id="EMD-9255"/>
<dbReference type="EMDB" id="EMD-9256"/>
<dbReference type="EMDB" id="EMD-9708"/>
<dbReference type="SMR" id="B6YWC1"/>
<dbReference type="DIP" id="DIP-61405N"/>
<dbReference type="IntAct" id="B6YWC1">
    <property type="interactions" value="1"/>
</dbReference>
<dbReference type="STRING" id="523850.TON_0896"/>
<dbReference type="GeneID" id="7017199"/>
<dbReference type="KEGG" id="ton:TON_0896"/>
<dbReference type="PATRIC" id="fig|523850.10.peg.904"/>
<dbReference type="eggNOG" id="arCOG03222">
    <property type="taxonomic scope" value="Archaea"/>
</dbReference>
<dbReference type="HOGENOM" id="CLU_062371_0_1_2"/>
<dbReference type="OrthoDB" id="86293at2157"/>
<dbReference type="Proteomes" id="UP000002727">
    <property type="component" value="Chromosome"/>
</dbReference>
<dbReference type="GO" id="GO:0003723">
    <property type="term" value="F:RNA binding"/>
    <property type="evidence" value="ECO:0007669"/>
    <property type="project" value="UniProtKB-KW"/>
</dbReference>
<dbReference type="GO" id="GO:0051607">
    <property type="term" value="P:defense response to virus"/>
    <property type="evidence" value="ECO:0007669"/>
    <property type="project" value="UniProtKB-KW"/>
</dbReference>
<dbReference type="InterPro" id="IPR005510">
    <property type="entry name" value="Csm4"/>
</dbReference>
<dbReference type="NCBIfam" id="TIGR01903">
    <property type="entry name" value="cas5_csm4"/>
    <property type="match status" value="1"/>
</dbReference>
<comment type="function">
    <text evidence="1">CRISPR (clustered regularly interspaced short palindromic repeat) is an adaptive immune system that provides protection against mobile genetic elements (viruses, transposable elements and conjugative plasmids). CRISPR clusters contain spacers, sequences complementary to antecedent mobile elements, and target invading nucleic acids. CRISPR clusters are transcribed and processed into CRISPR RNA (crRNA). The type III-A Csm effector complex binds crRNA and acts as a crRNA-guided RNase, DNase and cyclic oligoadenylate synthase; binding of target RNA cognate to the crRNA is required for all activities.</text>
</comment>
<comment type="function">
    <text evidence="1">The subunit probably binds to the 5' handle of the crRNA, helping in discrimination between self- and non-self.</text>
</comment>
<comment type="subunit">
    <text evidence="1 2">Probably part of the Csm effector complex, that includes Cas10, Csm2, Csm3, Csm4, Csm5 and mature crRNA (By similarity). Interacts with Cas10 (csm1) (PubMed:25773141).</text>
</comment>
<comment type="interaction">
    <interactant intactId="EBI-16149979">
        <id>B6YWC1</id>
    </interactant>
    <interactant intactId="EBI-16149952">
        <id>B6YWB8</id>
        <label>csm1</label>
    </interactant>
    <organismsDiffer>false</organismsDiffer>
    <experiments>2</experiments>
</comment>
<comment type="miscellaneous">
    <text evidence="5">Encoded in a type III-A CRISPR locus.</text>
</comment>
<comment type="similarity">
    <text evidence="4">Belongs to the CRISPR-associated Csm4 family.</text>
</comment>
<reference key="1">
    <citation type="journal article" date="2008" name="J. Bacteriol.">
        <title>The complete genome sequence of Thermococcus onnurineus NA1 reveals a mixed heterotrophic and carboxydotrophic metabolism.</title>
        <authorList>
            <person name="Lee H.S."/>
            <person name="Kang S.G."/>
            <person name="Bae S.S."/>
            <person name="Lim J.K."/>
            <person name="Cho Y."/>
            <person name="Kim Y.J."/>
            <person name="Jeon J.H."/>
            <person name="Cha S.-S."/>
            <person name="Kwon K.K."/>
            <person name="Kim H.-T."/>
            <person name="Park C.-J."/>
            <person name="Lee H.-W."/>
            <person name="Kim S.I."/>
            <person name="Chun J."/>
            <person name="Colwell R.R."/>
            <person name="Kim S.-J."/>
            <person name="Lee J.-H."/>
        </authorList>
    </citation>
    <scope>NUCLEOTIDE SEQUENCE [LARGE SCALE GENOMIC DNA]</scope>
    <source>
        <strain>NA1</strain>
    </source>
</reference>
<reference key="2">
    <citation type="journal article" date="2015" name="Structure">
        <title>Crystal structure of the Csm1 subunit of the Csm complex and its single-stranded DNA-specific nuclease activity.</title>
        <authorList>
            <person name="Jung T.Y."/>
            <person name="An Y."/>
            <person name="Park K.H."/>
            <person name="Lee M.H."/>
            <person name="Oh B.H."/>
            <person name="Woo E."/>
        </authorList>
    </citation>
    <scope>INTERACTION WITH CAS10 (CSM1)</scope>
    <scope>SUBUNIT</scope>
    <source>
        <strain>NA1</strain>
    </source>
</reference>
<proteinExistence type="evidence at protein level"/>
<accession>B6YWC1</accession>
<organism>
    <name type="scientific">Thermococcus onnurineus (strain NA1)</name>
    <dbReference type="NCBI Taxonomy" id="523850"/>
    <lineage>
        <taxon>Archaea</taxon>
        <taxon>Methanobacteriati</taxon>
        <taxon>Methanobacteriota</taxon>
        <taxon>Thermococci</taxon>
        <taxon>Thermococcales</taxon>
        <taxon>Thermococcaceae</taxon>
        <taxon>Thermococcus</taxon>
    </lineage>
</organism>
<protein>
    <recommendedName>
        <fullName>CRISPR system Cms protein Csm4</fullName>
    </recommendedName>
    <alternativeName>
        <fullName>CRISPR type III A-associated RAMP protein Csm4</fullName>
    </alternativeName>
</protein>
<name>CSM4_THEON</name>
<keyword id="KW-0002">3D-structure</keyword>
<keyword id="KW-0051">Antiviral defense</keyword>
<keyword id="KW-0694">RNA-binding</keyword>
<gene>
    <name evidence="3" type="primary">csm4</name>
    <name type="ordered locus">TON_0896</name>
</gene>
<sequence>MPKFIAVKLIPKGPFRDIPRADTLFGAIGNAISAIHGQSAVEELVDAFVGGARISSAFPYSGDTYYLPKPLSVEPALEGILTGLDEEERYTTAKRLRKAKYLDLKNFELALRLRPFTIPEEIPYARVDVPRVVLDRVTQDSSIYFWEEIRFREKSGVYFLYSGPREVFDGYIAPAMRFLGDTGIGGKSTWGAGLFEVEFHEMKIDAPGSEYSVTLSNALPTKTPVLWRLLRKGGWSFGRRKPRMTFIAEGSIVKNDPGGMERLELGLSHEVYVYGLTFPLGVELPEGLE</sequence>
<feature type="chain" id="PRO_0000446122" description="CRISPR system Cms protein Csm4">
    <location>
        <begin position="1"/>
        <end position="289"/>
    </location>
</feature>
<feature type="strand" evidence="10">
    <location>
        <begin position="3"/>
        <end position="13"/>
    </location>
</feature>
<feature type="strand" evidence="9">
    <location>
        <begin position="15"/>
        <end position="17"/>
    </location>
</feature>
<feature type="helix" evidence="10">
    <location>
        <begin position="21"/>
        <end position="36"/>
    </location>
</feature>
<feature type="helix" evidence="10">
    <location>
        <begin position="38"/>
        <end position="49"/>
    </location>
</feature>
<feature type="strand" evidence="10">
    <location>
        <begin position="58"/>
        <end position="61"/>
    </location>
</feature>
<feature type="strand" evidence="10">
    <location>
        <begin position="64"/>
        <end position="68"/>
    </location>
</feature>
<feature type="helix" evidence="10">
    <location>
        <begin position="71"/>
        <end position="73"/>
    </location>
</feature>
<feature type="turn" evidence="10">
    <location>
        <begin position="74"/>
        <end position="76"/>
    </location>
</feature>
<feature type="turn" evidence="9">
    <location>
        <begin position="77"/>
        <end position="79"/>
    </location>
</feature>
<feature type="turn" evidence="11">
    <location>
        <begin position="81"/>
        <end position="83"/>
    </location>
</feature>
<feature type="turn" evidence="11">
    <location>
        <begin position="86"/>
        <end position="88"/>
    </location>
</feature>
<feature type="helix" evidence="10">
    <location>
        <begin position="89"/>
        <end position="96"/>
    </location>
</feature>
<feature type="strand" evidence="10">
    <location>
        <begin position="101"/>
        <end position="103"/>
    </location>
</feature>
<feature type="helix" evidence="10">
    <location>
        <begin position="104"/>
        <end position="111"/>
    </location>
</feature>
<feature type="strand" evidence="10">
    <location>
        <begin position="123"/>
        <end position="133"/>
    </location>
</feature>
<feature type="turn" evidence="11">
    <location>
        <begin position="136"/>
        <end position="138"/>
    </location>
</feature>
<feature type="strand" evidence="10">
    <location>
        <begin position="142"/>
        <end position="151"/>
    </location>
</feature>
<feature type="strand" evidence="10">
    <location>
        <begin position="155"/>
        <end position="163"/>
    </location>
</feature>
<feature type="helix" evidence="10">
    <location>
        <begin position="165"/>
        <end position="170"/>
    </location>
</feature>
<feature type="helix" evidence="10">
    <location>
        <begin position="172"/>
        <end position="180"/>
    </location>
</feature>
<feature type="strand" evidence="11">
    <location>
        <begin position="184"/>
        <end position="186"/>
    </location>
</feature>
<feature type="helix" evidence="11">
    <location>
        <begin position="188"/>
        <end position="190"/>
    </location>
</feature>
<feature type="turn" evidence="7">
    <location>
        <begin position="191"/>
        <end position="193"/>
    </location>
</feature>
<feature type="strand" evidence="10">
    <location>
        <begin position="195"/>
        <end position="203"/>
    </location>
</feature>
<feature type="strand" evidence="10">
    <location>
        <begin position="212"/>
        <end position="216"/>
    </location>
</feature>
<feature type="strand" evidence="8">
    <location>
        <begin position="225"/>
        <end position="227"/>
    </location>
</feature>
<feature type="strand" evidence="10">
    <location>
        <begin position="229"/>
        <end position="231"/>
    </location>
</feature>
<feature type="strand" evidence="6">
    <location>
        <begin position="236"/>
        <end position="239"/>
    </location>
</feature>
<feature type="strand" evidence="10">
    <location>
        <begin position="245"/>
        <end position="247"/>
    </location>
</feature>
<feature type="strand" evidence="10">
    <location>
        <begin position="252"/>
        <end position="255"/>
    </location>
</feature>
<feature type="strand" evidence="10">
    <location>
        <begin position="261"/>
        <end position="263"/>
    </location>
</feature>
<feature type="strand" evidence="10">
    <location>
        <begin position="266"/>
        <end position="269"/>
    </location>
</feature>
<feature type="strand" evidence="10">
    <location>
        <begin position="271"/>
        <end position="273"/>
    </location>
</feature>
<feature type="strand" evidence="10">
    <location>
        <begin position="279"/>
        <end position="281"/>
    </location>
</feature>